<dbReference type="EC" id="3.6.5.-" evidence="1"/>
<dbReference type="EMBL" id="CP000095">
    <property type="protein sequence ID" value="AAZ59074.1"/>
    <property type="molecule type" value="Genomic_DNA"/>
</dbReference>
<dbReference type="RefSeq" id="WP_011294219.1">
    <property type="nucleotide sequence ID" value="NC_007335.2"/>
</dbReference>
<dbReference type="SMR" id="Q46HF4"/>
<dbReference type="STRING" id="59920.PMN2A_1586"/>
<dbReference type="KEGG" id="pmn:PMN2A_1586"/>
<dbReference type="HOGENOM" id="CLU_011747_2_3_3"/>
<dbReference type="OrthoDB" id="9807318at2"/>
<dbReference type="PhylomeDB" id="Q46HF4"/>
<dbReference type="Proteomes" id="UP000002535">
    <property type="component" value="Chromosome"/>
</dbReference>
<dbReference type="GO" id="GO:0005737">
    <property type="term" value="C:cytoplasm"/>
    <property type="evidence" value="ECO:0007669"/>
    <property type="project" value="UniProtKB-SubCell"/>
</dbReference>
<dbReference type="GO" id="GO:0005524">
    <property type="term" value="F:ATP binding"/>
    <property type="evidence" value="ECO:0007669"/>
    <property type="project" value="UniProtKB-KW"/>
</dbReference>
<dbReference type="GO" id="GO:0005525">
    <property type="term" value="F:GTP binding"/>
    <property type="evidence" value="ECO:0007669"/>
    <property type="project" value="UniProtKB-UniRule"/>
</dbReference>
<dbReference type="GO" id="GO:0003924">
    <property type="term" value="F:GTPase activity"/>
    <property type="evidence" value="ECO:0007669"/>
    <property type="project" value="UniProtKB-UniRule"/>
</dbReference>
<dbReference type="GO" id="GO:0000287">
    <property type="term" value="F:magnesium ion binding"/>
    <property type="evidence" value="ECO:0007669"/>
    <property type="project" value="InterPro"/>
</dbReference>
<dbReference type="GO" id="GO:0042254">
    <property type="term" value="P:ribosome biogenesis"/>
    <property type="evidence" value="ECO:0007669"/>
    <property type="project" value="UniProtKB-UniRule"/>
</dbReference>
<dbReference type="CDD" id="cd01898">
    <property type="entry name" value="Obg"/>
    <property type="match status" value="1"/>
</dbReference>
<dbReference type="FunFam" id="2.70.210.12:FF:000001">
    <property type="entry name" value="GTPase Obg"/>
    <property type="match status" value="1"/>
</dbReference>
<dbReference type="Gene3D" id="2.70.210.12">
    <property type="entry name" value="GTP1/OBG domain"/>
    <property type="match status" value="1"/>
</dbReference>
<dbReference type="Gene3D" id="3.40.50.300">
    <property type="entry name" value="P-loop containing nucleotide triphosphate hydrolases"/>
    <property type="match status" value="1"/>
</dbReference>
<dbReference type="HAMAP" id="MF_01454">
    <property type="entry name" value="GTPase_Obg"/>
    <property type="match status" value="1"/>
</dbReference>
<dbReference type="InterPro" id="IPR031167">
    <property type="entry name" value="G_OBG"/>
</dbReference>
<dbReference type="InterPro" id="IPR006073">
    <property type="entry name" value="GTP-bd"/>
</dbReference>
<dbReference type="InterPro" id="IPR014100">
    <property type="entry name" value="GTP-bd_Obg/CgtA"/>
</dbReference>
<dbReference type="InterPro" id="IPR006169">
    <property type="entry name" value="GTP1_OBG_dom"/>
</dbReference>
<dbReference type="InterPro" id="IPR036726">
    <property type="entry name" value="GTP1_OBG_dom_sf"/>
</dbReference>
<dbReference type="InterPro" id="IPR045086">
    <property type="entry name" value="OBG_GTPase"/>
</dbReference>
<dbReference type="InterPro" id="IPR027417">
    <property type="entry name" value="P-loop_NTPase"/>
</dbReference>
<dbReference type="NCBIfam" id="TIGR02729">
    <property type="entry name" value="Obg_CgtA"/>
    <property type="match status" value="1"/>
</dbReference>
<dbReference type="NCBIfam" id="NF008955">
    <property type="entry name" value="PRK12297.1"/>
    <property type="match status" value="1"/>
</dbReference>
<dbReference type="NCBIfam" id="NF008956">
    <property type="entry name" value="PRK12299.1"/>
    <property type="match status" value="1"/>
</dbReference>
<dbReference type="PANTHER" id="PTHR11702">
    <property type="entry name" value="DEVELOPMENTALLY REGULATED GTP-BINDING PROTEIN-RELATED"/>
    <property type="match status" value="1"/>
</dbReference>
<dbReference type="PANTHER" id="PTHR11702:SF31">
    <property type="entry name" value="MITOCHONDRIAL RIBOSOME-ASSOCIATED GTPASE 2"/>
    <property type="match status" value="1"/>
</dbReference>
<dbReference type="Pfam" id="PF01018">
    <property type="entry name" value="GTP1_OBG"/>
    <property type="match status" value="1"/>
</dbReference>
<dbReference type="Pfam" id="PF01926">
    <property type="entry name" value="MMR_HSR1"/>
    <property type="match status" value="1"/>
</dbReference>
<dbReference type="PIRSF" id="PIRSF002401">
    <property type="entry name" value="GTP_bd_Obg/CgtA"/>
    <property type="match status" value="1"/>
</dbReference>
<dbReference type="PRINTS" id="PR00326">
    <property type="entry name" value="GTP1OBG"/>
</dbReference>
<dbReference type="SUPFAM" id="SSF82051">
    <property type="entry name" value="Obg GTP-binding protein N-terminal domain"/>
    <property type="match status" value="1"/>
</dbReference>
<dbReference type="SUPFAM" id="SSF52540">
    <property type="entry name" value="P-loop containing nucleoside triphosphate hydrolases"/>
    <property type="match status" value="1"/>
</dbReference>
<dbReference type="PROSITE" id="PS51710">
    <property type="entry name" value="G_OBG"/>
    <property type="match status" value="1"/>
</dbReference>
<dbReference type="PROSITE" id="PS51883">
    <property type="entry name" value="OBG"/>
    <property type="match status" value="1"/>
</dbReference>
<name>OBG_PROMT</name>
<sequence length="329" mass="35291">MQFIDQAIIDVKAGSGGDGISAFRREKYVPAGGPAGGDGGQGGNVVLEADDNLQTLLDFKFQKLISAENGQRGGPNKCTGASGKDTVLKVPCGTEVRHLSTNIILGDLTNKGQQLIVAFGGKGGFGNARYLSNSNRAPEKFTEGKVGEEWSLQLELKLLAEVGIIGLPNAGKSTLISVLSSARPKIADYPFTTLIPNLGVVRRPSGDGTVFADIPGLISGASKGIGLGHDFLRHIERTKVLLHLIDSASTDPINDFKTINEELTSYGHGLISRPRIFVLNKKELLNENEIKKLLNKIEKMTMKKVHIISAVTKFGLDDLLSSIWNELGY</sequence>
<feature type="chain" id="PRO_0000386141" description="GTPase Obg">
    <location>
        <begin position="1"/>
        <end position="329"/>
    </location>
</feature>
<feature type="domain" description="Obg" evidence="2">
    <location>
        <begin position="1"/>
        <end position="159"/>
    </location>
</feature>
<feature type="domain" description="OBG-type G" evidence="1">
    <location>
        <begin position="160"/>
        <end position="328"/>
    </location>
</feature>
<feature type="binding site" evidence="1">
    <location>
        <begin position="166"/>
        <end position="173"/>
    </location>
    <ligand>
        <name>ATP</name>
        <dbReference type="ChEBI" id="CHEBI:30616"/>
    </ligand>
</feature>
<feature type="binding site" evidence="1">
    <location>
        <position position="173"/>
    </location>
    <ligand>
        <name>Mg(2+)</name>
        <dbReference type="ChEBI" id="CHEBI:18420"/>
    </ligand>
</feature>
<feature type="binding site" evidence="1">
    <location>
        <begin position="191"/>
        <end position="195"/>
    </location>
    <ligand>
        <name>ATP</name>
        <dbReference type="ChEBI" id="CHEBI:30616"/>
    </ligand>
</feature>
<feature type="binding site" evidence="1">
    <location>
        <position position="193"/>
    </location>
    <ligand>
        <name>Mg(2+)</name>
        <dbReference type="ChEBI" id="CHEBI:18420"/>
    </ligand>
</feature>
<feature type="binding site" evidence="1">
    <location>
        <begin position="213"/>
        <end position="216"/>
    </location>
    <ligand>
        <name>ATP</name>
        <dbReference type="ChEBI" id="CHEBI:30616"/>
    </ligand>
</feature>
<feature type="binding site" evidence="1">
    <location>
        <begin position="280"/>
        <end position="283"/>
    </location>
    <ligand>
        <name>ATP</name>
        <dbReference type="ChEBI" id="CHEBI:30616"/>
    </ligand>
</feature>
<feature type="binding site" evidence="1">
    <location>
        <begin position="309"/>
        <end position="311"/>
    </location>
    <ligand>
        <name>ATP</name>
        <dbReference type="ChEBI" id="CHEBI:30616"/>
    </ligand>
</feature>
<gene>
    <name evidence="1" type="primary">obg</name>
    <name type="ordered locus">PMN2A_1586</name>
</gene>
<organism>
    <name type="scientific">Prochlorococcus marinus (strain NATL2A)</name>
    <dbReference type="NCBI Taxonomy" id="59920"/>
    <lineage>
        <taxon>Bacteria</taxon>
        <taxon>Bacillati</taxon>
        <taxon>Cyanobacteriota</taxon>
        <taxon>Cyanophyceae</taxon>
        <taxon>Synechococcales</taxon>
        <taxon>Prochlorococcaceae</taxon>
        <taxon>Prochlorococcus</taxon>
    </lineage>
</organism>
<protein>
    <recommendedName>
        <fullName evidence="1">GTPase Obg</fullName>
        <ecNumber evidence="1">3.6.5.-</ecNumber>
    </recommendedName>
    <alternativeName>
        <fullName evidence="1">GTP-binding protein Obg</fullName>
    </alternativeName>
</protein>
<evidence type="ECO:0000255" key="1">
    <source>
        <dbReference type="HAMAP-Rule" id="MF_01454"/>
    </source>
</evidence>
<evidence type="ECO:0000255" key="2">
    <source>
        <dbReference type="PROSITE-ProRule" id="PRU01231"/>
    </source>
</evidence>
<reference key="1">
    <citation type="journal article" date="2007" name="PLoS Genet.">
        <title>Patterns and implications of gene gain and loss in the evolution of Prochlorococcus.</title>
        <authorList>
            <person name="Kettler G.C."/>
            <person name="Martiny A.C."/>
            <person name="Huang K."/>
            <person name="Zucker J."/>
            <person name="Coleman M.L."/>
            <person name="Rodrigue S."/>
            <person name="Chen F."/>
            <person name="Lapidus A."/>
            <person name="Ferriera S."/>
            <person name="Johnson J."/>
            <person name="Steglich C."/>
            <person name="Church G.M."/>
            <person name="Richardson P."/>
            <person name="Chisholm S.W."/>
        </authorList>
    </citation>
    <scope>NUCLEOTIDE SEQUENCE [LARGE SCALE GENOMIC DNA]</scope>
    <source>
        <strain>NATL2A</strain>
    </source>
</reference>
<keyword id="KW-0067">ATP-binding</keyword>
<keyword id="KW-0963">Cytoplasm</keyword>
<keyword id="KW-0342">GTP-binding</keyword>
<keyword id="KW-0378">Hydrolase</keyword>
<keyword id="KW-0460">Magnesium</keyword>
<keyword id="KW-0479">Metal-binding</keyword>
<keyword id="KW-0547">Nucleotide-binding</keyword>
<keyword id="KW-1185">Reference proteome</keyword>
<proteinExistence type="inferred from homology"/>
<accession>Q46HF4</accession>
<comment type="function">
    <text evidence="1">An essential GTPase which binds GTP, GDP and possibly (p)ppGpp with moderate affinity, with high nucleotide exchange rates and a fairly low GTP hydrolysis rate. Plays a role in control of the cell cycle, stress response, ribosome biogenesis and in those bacteria that undergo differentiation, in morphogenesis control.</text>
</comment>
<comment type="cofactor">
    <cofactor evidence="1">
        <name>Mg(2+)</name>
        <dbReference type="ChEBI" id="CHEBI:18420"/>
    </cofactor>
</comment>
<comment type="subunit">
    <text evidence="1">Monomer.</text>
</comment>
<comment type="subcellular location">
    <subcellularLocation>
        <location evidence="1">Cytoplasm</location>
    </subcellularLocation>
</comment>
<comment type="similarity">
    <text evidence="1">Belongs to the TRAFAC class OBG-HflX-like GTPase superfamily. OBG GTPase family.</text>
</comment>